<comment type="function">
    <text evidence="1">Responsible for the release of ribosomes from messenger RNA at the termination of protein biosynthesis. May increase the efficiency of translation by recycling ribosomes from one round of translation to another.</text>
</comment>
<comment type="subcellular location">
    <subcellularLocation>
        <location evidence="1">Cytoplasm</location>
    </subcellularLocation>
</comment>
<comment type="similarity">
    <text evidence="1">Belongs to the RRF family.</text>
</comment>
<feature type="chain" id="PRO_1000194935" description="Ribosome-recycling factor">
    <location>
        <begin position="1"/>
        <end position="185"/>
    </location>
</feature>
<reference key="1">
    <citation type="journal article" date="2009" name="PLoS Genet.">
        <title>The complete genome and proteome of Laribacter hongkongensis reveal potential mechanisms for adaptations to different temperatures and habitats.</title>
        <authorList>
            <person name="Woo P.C.Y."/>
            <person name="Lau S.K.P."/>
            <person name="Tse H."/>
            <person name="Teng J.L.L."/>
            <person name="Curreem S.O."/>
            <person name="Tsang A.K.L."/>
            <person name="Fan R.Y.Y."/>
            <person name="Wong G.K.M."/>
            <person name="Huang Y."/>
            <person name="Loman N.J."/>
            <person name="Snyder L.A.S."/>
            <person name="Cai J.J."/>
            <person name="Huang J.-D."/>
            <person name="Mak W."/>
            <person name="Pallen M.J."/>
            <person name="Lok S."/>
            <person name="Yuen K.-Y."/>
        </authorList>
    </citation>
    <scope>NUCLEOTIDE SEQUENCE [LARGE SCALE GENOMIC DNA]</scope>
    <source>
        <strain>HLHK9</strain>
    </source>
</reference>
<organism>
    <name type="scientific">Laribacter hongkongensis (strain HLHK9)</name>
    <dbReference type="NCBI Taxonomy" id="557598"/>
    <lineage>
        <taxon>Bacteria</taxon>
        <taxon>Pseudomonadati</taxon>
        <taxon>Pseudomonadota</taxon>
        <taxon>Betaproteobacteria</taxon>
        <taxon>Neisseriales</taxon>
        <taxon>Aquaspirillaceae</taxon>
        <taxon>Laribacter</taxon>
    </lineage>
</organism>
<accession>C1D9F3</accession>
<keyword id="KW-0963">Cytoplasm</keyword>
<keyword id="KW-0648">Protein biosynthesis</keyword>
<keyword id="KW-1185">Reference proteome</keyword>
<proteinExistence type="inferred from homology"/>
<name>RRF_LARHH</name>
<dbReference type="EMBL" id="CP001154">
    <property type="protein sequence ID" value="ACO75055.1"/>
    <property type="molecule type" value="Genomic_DNA"/>
</dbReference>
<dbReference type="RefSeq" id="WP_012697541.1">
    <property type="nucleotide sequence ID" value="NC_012559.1"/>
</dbReference>
<dbReference type="SMR" id="C1D9F3"/>
<dbReference type="STRING" id="557598.LHK_02071"/>
<dbReference type="KEGG" id="lhk:LHK_02071"/>
<dbReference type="eggNOG" id="COG0233">
    <property type="taxonomic scope" value="Bacteria"/>
</dbReference>
<dbReference type="HOGENOM" id="CLU_073981_2_1_4"/>
<dbReference type="Proteomes" id="UP000002010">
    <property type="component" value="Chromosome"/>
</dbReference>
<dbReference type="GO" id="GO:0005829">
    <property type="term" value="C:cytosol"/>
    <property type="evidence" value="ECO:0007669"/>
    <property type="project" value="GOC"/>
</dbReference>
<dbReference type="GO" id="GO:0043023">
    <property type="term" value="F:ribosomal large subunit binding"/>
    <property type="evidence" value="ECO:0007669"/>
    <property type="project" value="TreeGrafter"/>
</dbReference>
<dbReference type="GO" id="GO:0002184">
    <property type="term" value="P:cytoplasmic translational termination"/>
    <property type="evidence" value="ECO:0007669"/>
    <property type="project" value="TreeGrafter"/>
</dbReference>
<dbReference type="CDD" id="cd00520">
    <property type="entry name" value="RRF"/>
    <property type="match status" value="1"/>
</dbReference>
<dbReference type="FunFam" id="1.10.132.20:FF:000001">
    <property type="entry name" value="Ribosome-recycling factor"/>
    <property type="match status" value="1"/>
</dbReference>
<dbReference type="FunFam" id="3.30.1360.40:FF:000001">
    <property type="entry name" value="Ribosome-recycling factor"/>
    <property type="match status" value="1"/>
</dbReference>
<dbReference type="Gene3D" id="3.30.1360.40">
    <property type="match status" value="1"/>
</dbReference>
<dbReference type="Gene3D" id="1.10.132.20">
    <property type="entry name" value="Ribosome-recycling factor"/>
    <property type="match status" value="1"/>
</dbReference>
<dbReference type="HAMAP" id="MF_00040">
    <property type="entry name" value="RRF"/>
    <property type="match status" value="1"/>
</dbReference>
<dbReference type="InterPro" id="IPR002661">
    <property type="entry name" value="Ribosome_recyc_fac"/>
</dbReference>
<dbReference type="InterPro" id="IPR023584">
    <property type="entry name" value="Ribosome_recyc_fac_dom"/>
</dbReference>
<dbReference type="InterPro" id="IPR036191">
    <property type="entry name" value="RRF_sf"/>
</dbReference>
<dbReference type="NCBIfam" id="TIGR00496">
    <property type="entry name" value="frr"/>
    <property type="match status" value="1"/>
</dbReference>
<dbReference type="PANTHER" id="PTHR20982:SF3">
    <property type="entry name" value="MITOCHONDRIAL RIBOSOME RECYCLING FACTOR PSEUDO 1"/>
    <property type="match status" value="1"/>
</dbReference>
<dbReference type="PANTHER" id="PTHR20982">
    <property type="entry name" value="RIBOSOME RECYCLING FACTOR"/>
    <property type="match status" value="1"/>
</dbReference>
<dbReference type="Pfam" id="PF01765">
    <property type="entry name" value="RRF"/>
    <property type="match status" value="1"/>
</dbReference>
<dbReference type="SUPFAM" id="SSF55194">
    <property type="entry name" value="Ribosome recycling factor, RRF"/>
    <property type="match status" value="1"/>
</dbReference>
<gene>
    <name evidence="1" type="primary">frr</name>
    <name type="ordered locus">LHK_02071</name>
</gene>
<sequence>MINDIKKTAESKMQKTIEAFKHTLAKVRTGRAHAGLLDHITVDYYGSDTPINQVANVTLIDARTIGVQVWEKNMAAKVEKAIRDSDLGLNPMSMGEVIRVPMPALTEERRRDLTKVVKGEAEDARVAVRNVRRDANNDLKTLLKDKDITEDEERRAQDDIQKLTDKYVAEVDKLFAEKEKELMAI</sequence>
<protein>
    <recommendedName>
        <fullName evidence="1">Ribosome-recycling factor</fullName>
        <shortName evidence="1">RRF</shortName>
    </recommendedName>
    <alternativeName>
        <fullName evidence="1">Ribosome-releasing factor</fullName>
    </alternativeName>
</protein>
<evidence type="ECO:0000255" key="1">
    <source>
        <dbReference type="HAMAP-Rule" id="MF_00040"/>
    </source>
</evidence>